<feature type="chain" id="PRO_0000356357" description="Large ribosomal subunit protein bL33B">
    <location>
        <begin position="1"/>
        <end position="49"/>
    </location>
</feature>
<comment type="similarity">
    <text evidence="1">Belongs to the bacterial ribosomal protein bL33 family.</text>
</comment>
<accession>A9NGI6</accession>
<name>RL332_ACHLI</name>
<evidence type="ECO:0000255" key="1">
    <source>
        <dbReference type="HAMAP-Rule" id="MF_00294"/>
    </source>
</evidence>
<proteinExistence type="inferred from homology"/>
<organism>
    <name type="scientific">Acholeplasma laidlawii (strain PG-8A)</name>
    <dbReference type="NCBI Taxonomy" id="441768"/>
    <lineage>
        <taxon>Bacteria</taxon>
        <taxon>Bacillati</taxon>
        <taxon>Mycoplasmatota</taxon>
        <taxon>Mollicutes</taxon>
        <taxon>Acholeplasmatales</taxon>
        <taxon>Acholeplasmataceae</taxon>
        <taxon>Acholeplasma</taxon>
    </lineage>
</organism>
<protein>
    <recommendedName>
        <fullName evidence="1">Large ribosomal subunit protein bL33B</fullName>
    </recommendedName>
    <alternativeName>
        <fullName evidence="1">50S ribosomal protein L33 2</fullName>
    </alternativeName>
</protein>
<dbReference type="EMBL" id="CP000896">
    <property type="protein sequence ID" value="ABX81466.1"/>
    <property type="molecule type" value="Genomic_DNA"/>
</dbReference>
<dbReference type="RefSeq" id="WP_012242797.1">
    <property type="nucleotide sequence ID" value="NC_010163.1"/>
</dbReference>
<dbReference type="SMR" id="A9NGI6"/>
<dbReference type="STRING" id="441768.ACL_0852"/>
<dbReference type="GeneID" id="41339007"/>
<dbReference type="KEGG" id="acl:ACL_0852"/>
<dbReference type="eggNOG" id="COG0267">
    <property type="taxonomic scope" value="Bacteria"/>
</dbReference>
<dbReference type="HOGENOM" id="CLU_190949_0_2_14"/>
<dbReference type="OrthoDB" id="197660at2"/>
<dbReference type="Proteomes" id="UP000008558">
    <property type="component" value="Chromosome"/>
</dbReference>
<dbReference type="GO" id="GO:0005737">
    <property type="term" value="C:cytoplasm"/>
    <property type="evidence" value="ECO:0007669"/>
    <property type="project" value="UniProtKB-ARBA"/>
</dbReference>
<dbReference type="GO" id="GO:1990904">
    <property type="term" value="C:ribonucleoprotein complex"/>
    <property type="evidence" value="ECO:0007669"/>
    <property type="project" value="UniProtKB-KW"/>
</dbReference>
<dbReference type="GO" id="GO:0005840">
    <property type="term" value="C:ribosome"/>
    <property type="evidence" value="ECO:0007669"/>
    <property type="project" value="UniProtKB-KW"/>
</dbReference>
<dbReference type="GO" id="GO:0003735">
    <property type="term" value="F:structural constituent of ribosome"/>
    <property type="evidence" value="ECO:0007669"/>
    <property type="project" value="InterPro"/>
</dbReference>
<dbReference type="GO" id="GO:0006412">
    <property type="term" value="P:translation"/>
    <property type="evidence" value="ECO:0007669"/>
    <property type="project" value="UniProtKB-UniRule"/>
</dbReference>
<dbReference type="Gene3D" id="2.20.28.120">
    <property type="entry name" value="Ribosomal protein L33"/>
    <property type="match status" value="1"/>
</dbReference>
<dbReference type="HAMAP" id="MF_00294">
    <property type="entry name" value="Ribosomal_bL33"/>
    <property type="match status" value="1"/>
</dbReference>
<dbReference type="InterPro" id="IPR001705">
    <property type="entry name" value="Ribosomal_bL33"/>
</dbReference>
<dbReference type="InterPro" id="IPR018264">
    <property type="entry name" value="Ribosomal_bL33_CS"/>
</dbReference>
<dbReference type="InterPro" id="IPR038584">
    <property type="entry name" value="Ribosomal_bL33_sf"/>
</dbReference>
<dbReference type="InterPro" id="IPR011332">
    <property type="entry name" value="Ribosomal_zn-bd"/>
</dbReference>
<dbReference type="NCBIfam" id="NF001764">
    <property type="entry name" value="PRK00504.1"/>
    <property type="match status" value="1"/>
</dbReference>
<dbReference type="NCBIfam" id="NF001860">
    <property type="entry name" value="PRK00595.1"/>
    <property type="match status" value="1"/>
</dbReference>
<dbReference type="NCBIfam" id="TIGR01023">
    <property type="entry name" value="rpmG_bact"/>
    <property type="match status" value="1"/>
</dbReference>
<dbReference type="PANTHER" id="PTHR43168">
    <property type="entry name" value="50S RIBOSOMAL PROTEIN L33, CHLOROPLASTIC"/>
    <property type="match status" value="1"/>
</dbReference>
<dbReference type="PANTHER" id="PTHR43168:SF2">
    <property type="entry name" value="LARGE RIBOSOMAL SUBUNIT PROTEIN BL33C"/>
    <property type="match status" value="1"/>
</dbReference>
<dbReference type="Pfam" id="PF00471">
    <property type="entry name" value="Ribosomal_L33"/>
    <property type="match status" value="1"/>
</dbReference>
<dbReference type="SUPFAM" id="SSF57829">
    <property type="entry name" value="Zn-binding ribosomal proteins"/>
    <property type="match status" value="1"/>
</dbReference>
<dbReference type="PROSITE" id="PS00582">
    <property type="entry name" value="RIBOSOMAL_L33"/>
    <property type="match status" value="1"/>
</dbReference>
<gene>
    <name evidence="1" type="primary">rpmG2</name>
    <name type="ordered locus">ACL_0852</name>
</gene>
<reference key="1">
    <citation type="journal article" date="2011" name="J. Bacteriol.">
        <title>Complete genome and proteome of Acholeplasma laidlawii.</title>
        <authorList>
            <person name="Lazarev V.N."/>
            <person name="Levitskii S.A."/>
            <person name="Basovskii Y.I."/>
            <person name="Chukin M.M."/>
            <person name="Akopian T.A."/>
            <person name="Vereshchagin V.V."/>
            <person name="Kostrjukova E.S."/>
            <person name="Kovaleva G.Y."/>
            <person name="Kazanov M.D."/>
            <person name="Malko D.B."/>
            <person name="Vitreschak A.G."/>
            <person name="Sernova N.V."/>
            <person name="Gelfand M.S."/>
            <person name="Demina I.A."/>
            <person name="Serebryakova M.V."/>
            <person name="Galyamina M.A."/>
            <person name="Vtyurin N.N."/>
            <person name="Rogov S.I."/>
            <person name="Alexeev D.G."/>
            <person name="Ladygina V.G."/>
            <person name="Govorun V.M."/>
        </authorList>
    </citation>
    <scope>NUCLEOTIDE SEQUENCE [LARGE SCALE GENOMIC DNA]</scope>
    <source>
        <strain>PG-8A</strain>
    </source>
</reference>
<keyword id="KW-1185">Reference proteome</keyword>
<keyword id="KW-0687">Ribonucleoprotein</keyword>
<keyword id="KW-0689">Ribosomal protein</keyword>
<sequence>MRELVKLVCTECGDENYHTTKNKKTTPDRLEMSKYCPRTRKYTLHREKK</sequence>